<accession>A9ITB6</accession>
<keyword id="KW-0963">Cytoplasm</keyword>
<keyword id="KW-0269">Exonuclease</keyword>
<keyword id="KW-0378">Hydrolase</keyword>
<keyword id="KW-0540">Nuclease</keyword>
<proteinExistence type="inferred from homology"/>
<comment type="function">
    <text evidence="1">Bidirectionally degrades single-stranded DNA into large acid-insoluble oligonucleotides, which are then degraded further into small acid-soluble oligonucleotides.</text>
</comment>
<comment type="catalytic activity">
    <reaction evidence="1">
        <text>Exonucleolytic cleavage in either 5'- to 3'- or 3'- to 5'-direction to yield nucleoside 5'-phosphates.</text>
        <dbReference type="EC" id="3.1.11.6"/>
    </reaction>
</comment>
<comment type="subunit">
    <text evidence="1">Heterooligomer composed of large and small subunits.</text>
</comment>
<comment type="subcellular location">
    <subcellularLocation>
        <location evidence="1">Cytoplasm</location>
    </subcellularLocation>
</comment>
<comment type="similarity">
    <text evidence="1">Belongs to the XseB family.</text>
</comment>
<name>EX7S_BORPD</name>
<reference key="1">
    <citation type="journal article" date="2008" name="BMC Genomics">
        <title>The missing link: Bordetella petrii is endowed with both the metabolic versatility of environmental bacteria and virulence traits of pathogenic Bordetellae.</title>
        <authorList>
            <person name="Gross R."/>
            <person name="Guzman C.A."/>
            <person name="Sebaihia M."/>
            <person name="Martin dos Santos V.A.P."/>
            <person name="Pieper D.H."/>
            <person name="Koebnik R."/>
            <person name="Lechner M."/>
            <person name="Bartels D."/>
            <person name="Buhrmester J."/>
            <person name="Choudhuri J.V."/>
            <person name="Ebensen T."/>
            <person name="Gaigalat L."/>
            <person name="Herrmann S."/>
            <person name="Khachane A.N."/>
            <person name="Larisch C."/>
            <person name="Link S."/>
            <person name="Linke B."/>
            <person name="Meyer F."/>
            <person name="Mormann S."/>
            <person name="Nakunst D."/>
            <person name="Rueckert C."/>
            <person name="Schneiker-Bekel S."/>
            <person name="Schulze K."/>
            <person name="Voerholter F.-J."/>
            <person name="Yevsa T."/>
            <person name="Engle J.T."/>
            <person name="Goldman W.E."/>
            <person name="Puehler A."/>
            <person name="Goebel U.B."/>
            <person name="Goesmann A."/>
            <person name="Bloecker H."/>
            <person name="Kaiser O."/>
            <person name="Martinez-Arias R."/>
        </authorList>
    </citation>
    <scope>NUCLEOTIDE SEQUENCE [LARGE SCALE GENOMIC DNA]</scope>
    <source>
        <strain>ATCC BAA-461 / DSM 12804 / CCUG 43448</strain>
    </source>
</reference>
<protein>
    <recommendedName>
        <fullName evidence="1">Exodeoxyribonuclease 7 small subunit</fullName>
        <ecNumber evidence="1">3.1.11.6</ecNumber>
    </recommendedName>
    <alternativeName>
        <fullName evidence="1">Exodeoxyribonuclease VII small subunit</fullName>
        <shortName evidence="1">Exonuclease VII small subunit</shortName>
    </alternativeName>
</protein>
<feature type="chain" id="PRO_1000119902" description="Exodeoxyribonuclease 7 small subunit">
    <location>
        <begin position="1"/>
        <end position="88"/>
    </location>
</feature>
<evidence type="ECO:0000255" key="1">
    <source>
        <dbReference type="HAMAP-Rule" id="MF_00337"/>
    </source>
</evidence>
<dbReference type="EC" id="3.1.11.6" evidence="1"/>
<dbReference type="EMBL" id="AM902716">
    <property type="protein sequence ID" value="CAP43404.1"/>
    <property type="molecule type" value="Genomic_DNA"/>
</dbReference>
<dbReference type="SMR" id="A9ITB6"/>
<dbReference type="STRING" id="94624.Bpet3062"/>
<dbReference type="KEGG" id="bpt:Bpet3062"/>
<dbReference type="eggNOG" id="COG1722">
    <property type="taxonomic scope" value="Bacteria"/>
</dbReference>
<dbReference type="Proteomes" id="UP000001225">
    <property type="component" value="Chromosome"/>
</dbReference>
<dbReference type="GO" id="GO:0005829">
    <property type="term" value="C:cytosol"/>
    <property type="evidence" value="ECO:0007669"/>
    <property type="project" value="TreeGrafter"/>
</dbReference>
<dbReference type="GO" id="GO:0009318">
    <property type="term" value="C:exodeoxyribonuclease VII complex"/>
    <property type="evidence" value="ECO:0007669"/>
    <property type="project" value="InterPro"/>
</dbReference>
<dbReference type="GO" id="GO:0008855">
    <property type="term" value="F:exodeoxyribonuclease VII activity"/>
    <property type="evidence" value="ECO:0007669"/>
    <property type="project" value="UniProtKB-UniRule"/>
</dbReference>
<dbReference type="GO" id="GO:0006308">
    <property type="term" value="P:DNA catabolic process"/>
    <property type="evidence" value="ECO:0007669"/>
    <property type="project" value="UniProtKB-UniRule"/>
</dbReference>
<dbReference type="Gene3D" id="1.10.287.1040">
    <property type="entry name" value="Exonuclease VII, small subunit"/>
    <property type="match status" value="1"/>
</dbReference>
<dbReference type="HAMAP" id="MF_00337">
    <property type="entry name" value="Exonuc_7_S"/>
    <property type="match status" value="1"/>
</dbReference>
<dbReference type="InterPro" id="IPR003761">
    <property type="entry name" value="Exonuc_VII_S"/>
</dbReference>
<dbReference type="InterPro" id="IPR037004">
    <property type="entry name" value="Exonuc_VII_ssu_sf"/>
</dbReference>
<dbReference type="NCBIfam" id="NF002140">
    <property type="entry name" value="PRK00977.1-4"/>
    <property type="match status" value="1"/>
</dbReference>
<dbReference type="NCBIfam" id="NF002141">
    <property type="entry name" value="PRK00977.1-5"/>
    <property type="match status" value="1"/>
</dbReference>
<dbReference type="NCBIfam" id="TIGR01280">
    <property type="entry name" value="xseB"/>
    <property type="match status" value="1"/>
</dbReference>
<dbReference type="PANTHER" id="PTHR34137">
    <property type="entry name" value="EXODEOXYRIBONUCLEASE 7 SMALL SUBUNIT"/>
    <property type="match status" value="1"/>
</dbReference>
<dbReference type="PANTHER" id="PTHR34137:SF1">
    <property type="entry name" value="EXODEOXYRIBONUCLEASE 7 SMALL SUBUNIT"/>
    <property type="match status" value="1"/>
</dbReference>
<dbReference type="Pfam" id="PF02609">
    <property type="entry name" value="Exonuc_VII_S"/>
    <property type="match status" value="1"/>
</dbReference>
<dbReference type="SUPFAM" id="SSF116842">
    <property type="entry name" value="XseB-like"/>
    <property type="match status" value="1"/>
</dbReference>
<gene>
    <name evidence="1" type="primary">xseB</name>
    <name type="ordered locus">Bpet3062</name>
</gene>
<organism>
    <name type="scientific">Bordetella petrii (strain ATCC BAA-461 / DSM 12804 / CCUG 43448)</name>
    <dbReference type="NCBI Taxonomy" id="340100"/>
    <lineage>
        <taxon>Bacteria</taxon>
        <taxon>Pseudomonadati</taxon>
        <taxon>Pseudomonadota</taxon>
        <taxon>Betaproteobacteria</taxon>
        <taxon>Burkholderiales</taxon>
        <taxon>Alcaligenaceae</taxon>
        <taxon>Bordetella</taxon>
    </lineage>
</organism>
<sequence>MATSPQTDPQHDDRPLPQDFETALAELETLVAAMEDGSLPLEQSLAAYRRGVELTRVCQERLAQAEQQVKVLEDGLLRPLDPRALDDE</sequence>